<accession>P51613</accession>
<proteinExistence type="evidence at transcript level"/>
<dbReference type="EC" id="3.2.1.14"/>
<dbReference type="EMBL" id="Z54234">
    <property type="protein sequence ID" value="CAA90970.1"/>
    <property type="molecule type" value="mRNA"/>
</dbReference>
<dbReference type="SMR" id="P51613"/>
<dbReference type="CAZy" id="CBM18">
    <property type="family name" value="Carbohydrate-Binding Module Family 18"/>
</dbReference>
<dbReference type="CAZy" id="GH19">
    <property type="family name" value="Glycoside Hydrolase Family 19"/>
</dbReference>
<dbReference type="PaxDb" id="29760-VIT_03s0038g03400.t01"/>
<dbReference type="EnsemblPlants" id="Vitvi03g00206_t001">
    <property type="protein sequence ID" value="Vitvi03g00206_P001"/>
    <property type="gene ID" value="Vitvi03g00206"/>
</dbReference>
<dbReference type="Gramene" id="Vitvi03g00206_t001">
    <property type="protein sequence ID" value="Vitvi03g00206_P001"/>
    <property type="gene ID" value="Vitvi03g00206"/>
</dbReference>
<dbReference type="eggNOG" id="KOG4742">
    <property type="taxonomic scope" value="Eukaryota"/>
</dbReference>
<dbReference type="HOGENOM" id="CLU_045506_1_0_1"/>
<dbReference type="OrthoDB" id="5985073at2759"/>
<dbReference type="ExpressionAtlas" id="P51613">
    <property type="expression patterns" value="baseline and differential"/>
</dbReference>
<dbReference type="GO" id="GO:0008061">
    <property type="term" value="F:chitin binding"/>
    <property type="evidence" value="ECO:0007669"/>
    <property type="project" value="UniProtKB-KW"/>
</dbReference>
<dbReference type="GO" id="GO:0008843">
    <property type="term" value="F:endochitinase activity"/>
    <property type="evidence" value="ECO:0007669"/>
    <property type="project" value="UniProtKB-EC"/>
</dbReference>
<dbReference type="GO" id="GO:0016998">
    <property type="term" value="P:cell wall macromolecule catabolic process"/>
    <property type="evidence" value="ECO:0007669"/>
    <property type="project" value="InterPro"/>
</dbReference>
<dbReference type="GO" id="GO:0006032">
    <property type="term" value="P:chitin catabolic process"/>
    <property type="evidence" value="ECO:0007669"/>
    <property type="project" value="UniProtKB-KW"/>
</dbReference>
<dbReference type="GO" id="GO:0050832">
    <property type="term" value="P:defense response to fungus"/>
    <property type="evidence" value="ECO:0007669"/>
    <property type="project" value="UniProtKB-ARBA"/>
</dbReference>
<dbReference type="GO" id="GO:0000272">
    <property type="term" value="P:polysaccharide catabolic process"/>
    <property type="evidence" value="ECO:0007669"/>
    <property type="project" value="UniProtKB-KW"/>
</dbReference>
<dbReference type="CDD" id="cd00325">
    <property type="entry name" value="chitinase_GH19"/>
    <property type="match status" value="1"/>
</dbReference>
<dbReference type="CDD" id="cd06921">
    <property type="entry name" value="ChtBD1_GH19_hevein"/>
    <property type="match status" value="1"/>
</dbReference>
<dbReference type="FunFam" id="3.30.60.10:FF:000001">
    <property type="entry name" value="Basic endochitinase"/>
    <property type="match status" value="1"/>
</dbReference>
<dbReference type="FunFam" id="3.30.20.10:FF:000001">
    <property type="entry name" value="Endochitinase (Chitinase)"/>
    <property type="match status" value="1"/>
</dbReference>
<dbReference type="Gene3D" id="1.10.530.10">
    <property type="match status" value="1"/>
</dbReference>
<dbReference type="Gene3D" id="3.30.20.10">
    <property type="entry name" value="Endochitinase, domain 2"/>
    <property type="match status" value="1"/>
</dbReference>
<dbReference type="Gene3D" id="3.30.60.10">
    <property type="entry name" value="Endochitinase-like"/>
    <property type="match status" value="1"/>
</dbReference>
<dbReference type="InterPro" id="IPR001002">
    <property type="entry name" value="Chitin-bd_1"/>
</dbReference>
<dbReference type="InterPro" id="IPR018371">
    <property type="entry name" value="Chitin-binding_1_CS"/>
</dbReference>
<dbReference type="InterPro" id="IPR036861">
    <property type="entry name" value="Endochitinase-like_sf"/>
</dbReference>
<dbReference type="InterPro" id="IPR016283">
    <property type="entry name" value="Glyco_hydro_19"/>
</dbReference>
<dbReference type="InterPro" id="IPR000726">
    <property type="entry name" value="Glyco_hydro_19_cat"/>
</dbReference>
<dbReference type="InterPro" id="IPR023346">
    <property type="entry name" value="Lysozyme-like_dom_sf"/>
</dbReference>
<dbReference type="PANTHER" id="PTHR22595:SF79">
    <property type="entry name" value="CHITINASE 12"/>
    <property type="match status" value="1"/>
</dbReference>
<dbReference type="PANTHER" id="PTHR22595">
    <property type="entry name" value="CHITINASE-RELATED"/>
    <property type="match status" value="1"/>
</dbReference>
<dbReference type="Pfam" id="PF00187">
    <property type="entry name" value="Chitin_bind_1"/>
    <property type="match status" value="1"/>
</dbReference>
<dbReference type="Pfam" id="PF00182">
    <property type="entry name" value="Glyco_hydro_19"/>
    <property type="match status" value="1"/>
</dbReference>
<dbReference type="PIRSF" id="PIRSF001060">
    <property type="entry name" value="Endochitinase"/>
    <property type="match status" value="1"/>
</dbReference>
<dbReference type="PRINTS" id="PR00451">
    <property type="entry name" value="CHITINBINDNG"/>
</dbReference>
<dbReference type="SMART" id="SM00270">
    <property type="entry name" value="ChtBD1"/>
    <property type="match status" value="1"/>
</dbReference>
<dbReference type="SUPFAM" id="SSF53955">
    <property type="entry name" value="Lysozyme-like"/>
    <property type="match status" value="1"/>
</dbReference>
<dbReference type="SUPFAM" id="SSF57016">
    <property type="entry name" value="Plant lectins/antimicrobial peptides"/>
    <property type="match status" value="1"/>
</dbReference>
<dbReference type="PROSITE" id="PS00026">
    <property type="entry name" value="CHIT_BIND_I_1"/>
    <property type="match status" value="1"/>
</dbReference>
<dbReference type="PROSITE" id="PS50941">
    <property type="entry name" value="CHIT_BIND_I_2"/>
    <property type="match status" value="1"/>
</dbReference>
<dbReference type="PROSITE" id="PS00773">
    <property type="entry name" value="CHITINASE_19_1"/>
    <property type="match status" value="1"/>
</dbReference>
<dbReference type="PROSITE" id="PS00774">
    <property type="entry name" value="CHITINASE_19_2"/>
    <property type="match status" value="1"/>
</dbReference>
<gene>
    <name type="primary">CHIT1B</name>
</gene>
<reference key="1">
    <citation type="journal article" date="1997" name="Plant Physiol.">
        <title>Differential expression of chitinases in Vitis vinifera L. responding to systemic acquired resistance activators or fungal challenge.</title>
        <authorList>
            <person name="Busam G."/>
            <person name="Kassemeyer H.H."/>
            <person name="Matern U."/>
        </authorList>
    </citation>
    <scope>NUCLEOTIDE SEQUENCE [MRNA]</scope>
    <source>
        <strain>cv. Pinot</strain>
    </source>
</reference>
<comment type="function">
    <text>Defense against chitin-containing fungal pathogens.</text>
</comment>
<comment type="catalytic activity">
    <reaction>
        <text>Random endo-hydrolysis of N-acetyl-beta-D-glucosaminide (1-&gt;4)-beta-linkages in chitin and chitodextrins.</text>
        <dbReference type="EC" id="3.2.1.14"/>
    </reaction>
</comment>
<comment type="similarity">
    <text evidence="4">Belongs to the glycosyl hydrolase 19 family. Chitinase class I subfamily.</text>
</comment>
<feature type="signal peptide" evidence="2">
    <location>
        <begin position="1"/>
        <end position="20"/>
    </location>
</feature>
<feature type="chain" id="PRO_0000005338" description="Basic endochitinase">
    <location>
        <begin position="21"/>
        <end position="314"/>
    </location>
</feature>
<feature type="domain" description="Chitin-binding type-1" evidence="3">
    <location>
        <begin position="21"/>
        <end position="61"/>
    </location>
</feature>
<feature type="active site" description="Proton donor" evidence="1">
    <location>
        <position position="130"/>
    </location>
</feature>
<feature type="disulfide bond" evidence="3">
    <location>
        <begin position="23"/>
        <end position="38"/>
    </location>
</feature>
<feature type="disulfide bond" evidence="3">
    <location>
        <begin position="32"/>
        <end position="44"/>
    </location>
</feature>
<feature type="disulfide bond" evidence="3">
    <location>
        <begin position="37"/>
        <end position="51"/>
    </location>
</feature>
<feature type="disulfide bond" evidence="3">
    <location>
        <begin position="55"/>
        <end position="59"/>
    </location>
</feature>
<feature type="disulfide bond" evidence="3">
    <location>
        <begin position="86"/>
        <end position="148"/>
    </location>
</feature>
<feature type="disulfide bond" evidence="3">
    <location>
        <begin position="160"/>
        <end position="168"/>
    </location>
</feature>
<feature type="disulfide bond" evidence="3">
    <location>
        <begin position="267"/>
        <end position="299"/>
    </location>
</feature>
<evidence type="ECO:0000250" key="1">
    <source>
        <dbReference type="UniProtKB" id="P29022"/>
    </source>
</evidence>
<evidence type="ECO:0000255" key="2"/>
<evidence type="ECO:0000255" key="3">
    <source>
        <dbReference type="PROSITE-ProRule" id="PRU00261"/>
    </source>
</evidence>
<evidence type="ECO:0000305" key="4"/>
<sequence length="314" mass="33429">MGLWALVAFCLLSLILVGSAEQCGGQAGGRVCPGGACCSKFGWCGNTADYCGSGCQSQCSSTGDIGQLITRSMFNDMLKHRNEGSCPGKGFYTYDAFIAAAKAFPGFGTTGDTTTRKREIAAFLAQTSHETTGGWASAPDGPYAWGYCYLREQGSPGAYCVPSAQWPCAAGRKYYGRGPIQISYNYNYGQAGKAIGVDLVNNPDLVATDAVISFKTAFWFWMTPQSPKPSCHNVITGGWTPSGADRSAGRLPGFGVITNIINGGVECGKGVVPQVQDRIGFYKRYCDILRVSYGNNLDCNNQRPFGSGLLLDTI</sequence>
<keyword id="KW-0119">Carbohydrate metabolism</keyword>
<keyword id="KW-0146">Chitin degradation</keyword>
<keyword id="KW-0147">Chitin-binding</keyword>
<keyword id="KW-1015">Disulfide bond</keyword>
<keyword id="KW-0326">Glycosidase</keyword>
<keyword id="KW-0378">Hydrolase</keyword>
<keyword id="KW-0611">Plant defense</keyword>
<keyword id="KW-0624">Polysaccharide degradation</keyword>
<keyword id="KW-0732">Signal</keyword>
<name>CHIB_VITVI</name>
<protein>
    <recommendedName>
        <fullName>Basic endochitinase</fullName>
        <ecNumber>3.2.1.14</ecNumber>
    </recommendedName>
</protein>
<organism>
    <name type="scientific">Vitis vinifera</name>
    <name type="common">Grape</name>
    <dbReference type="NCBI Taxonomy" id="29760"/>
    <lineage>
        <taxon>Eukaryota</taxon>
        <taxon>Viridiplantae</taxon>
        <taxon>Streptophyta</taxon>
        <taxon>Embryophyta</taxon>
        <taxon>Tracheophyta</taxon>
        <taxon>Spermatophyta</taxon>
        <taxon>Magnoliopsida</taxon>
        <taxon>eudicotyledons</taxon>
        <taxon>Gunneridae</taxon>
        <taxon>Pentapetalae</taxon>
        <taxon>rosids</taxon>
        <taxon>Vitales</taxon>
        <taxon>Vitaceae</taxon>
        <taxon>Viteae</taxon>
        <taxon>Vitis</taxon>
    </lineage>
</organism>